<gene>
    <name evidence="1" type="primary">ndhB</name>
    <name type="ordered locus">SYNPCC7002_A2547</name>
</gene>
<comment type="function">
    <text evidence="1">NDH-1 shuttles electrons from an unknown electron donor, via FMN and iron-sulfur (Fe-S) centers, to quinones in the respiratory and/or the photosynthetic chain. The immediate electron acceptor for the enzyme in this species is believed to be plastoquinone. Couples the redox reaction to proton translocation, and thus conserves the redox energy in a proton gradient. Cyanobacterial NDH-1 also plays a role in inorganic carbon-concentration.</text>
</comment>
<comment type="catalytic activity">
    <reaction evidence="1">
        <text>a plastoquinone + NADH + (n+1) H(+)(in) = a plastoquinol + NAD(+) + n H(+)(out)</text>
        <dbReference type="Rhea" id="RHEA:42608"/>
        <dbReference type="Rhea" id="RHEA-COMP:9561"/>
        <dbReference type="Rhea" id="RHEA-COMP:9562"/>
        <dbReference type="ChEBI" id="CHEBI:15378"/>
        <dbReference type="ChEBI" id="CHEBI:17757"/>
        <dbReference type="ChEBI" id="CHEBI:57540"/>
        <dbReference type="ChEBI" id="CHEBI:57945"/>
        <dbReference type="ChEBI" id="CHEBI:62192"/>
    </reaction>
</comment>
<comment type="catalytic activity">
    <reaction evidence="1">
        <text>a plastoquinone + NADPH + (n+1) H(+)(in) = a plastoquinol + NADP(+) + n H(+)(out)</text>
        <dbReference type="Rhea" id="RHEA:42612"/>
        <dbReference type="Rhea" id="RHEA-COMP:9561"/>
        <dbReference type="Rhea" id="RHEA-COMP:9562"/>
        <dbReference type="ChEBI" id="CHEBI:15378"/>
        <dbReference type="ChEBI" id="CHEBI:17757"/>
        <dbReference type="ChEBI" id="CHEBI:57783"/>
        <dbReference type="ChEBI" id="CHEBI:58349"/>
        <dbReference type="ChEBI" id="CHEBI:62192"/>
    </reaction>
</comment>
<comment type="subunit">
    <text evidence="1">NDH-1 can be composed of about 15 different subunits; different subcomplexes with different compositions have been identified which probably have different functions.</text>
</comment>
<comment type="subcellular location">
    <subcellularLocation>
        <location evidence="1">Cellular thylakoid membrane</location>
        <topology evidence="1">Multi-pass membrane protein</topology>
    </subcellularLocation>
</comment>
<comment type="similarity">
    <text evidence="1">Belongs to the complex I subunit 2 family.</text>
</comment>
<protein>
    <recommendedName>
        <fullName evidence="1">NAD(P)H-quinone oxidoreductase subunit 2</fullName>
        <ecNumber evidence="1">7.1.1.-</ecNumber>
    </recommendedName>
    <alternativeName>
        <fullName evidence="1">NAD(P)H dehydrogenase subunit 2</fullName>
    </alternativeName>
    <alternativeName>
        <fullName evidence="1">NADH-plastoquinone oxidoreductase subunit 2</fullName>
    </alternativeName>
    <alternativeName>
        <fullName evidence="1">NDH-1, subunit 2</fullName>
    </alternativeName>
</protein>
<evidence type="ECO:0000255" key="1">
    <source>
        <dbReference type="HAMAP-Rule" id="MF_00445"/>
    </source>
</evidence>
<name>NU2C_PICP2</name>
<dbReference type="EC" id="7.1.1.-" evidence="1"/>
<dbReference type="EMBL" id="AF381035">
    <property type="protein sequence ID" value="AAN03537.1"/>
    <property type="molecule type" value="Genomic_DNA"/>
</dbReference>
<dbReference type="EMBL" id="CP000951">
    <property type="protein sequence ID" value="ACB00524.1"/>
    <property type="molecule type" value="Genomic_DNA"/>
</dbReference>
<dbReference type="RefSeq" id="WP_012308142.1">
    <property type="nucleotide sequence ID" value="NZ_JAHHPU010000003.1"/>
</dbReference>
<dbReference type="SMR" id="Q8KX56"/>
<dbReference type="STRING" id="32049.SYNPCC7002_A2547"/>
<dbReference type="KEGG" id="syp:SYNPCC7002_A2547"/>
<dbReference type="eggNOG" id="COG1007">
    <property type="taxonomic scope" value="Bacteria"/>
</dbReference>
<dbReference type="HOGENOM" id="CLU_007100_1_5_3"/>
<dbReference type="Proteomes" id="UP000001688">
    <property type="component" value="Chromosome"/>
</dbReference>
<dbReference type="GO" id="GO:0031676">
    <property type="term" value="C:plasma membrane-derived thylakoid membrane"/>
    <property type="evidence" value="ECO:0007669"/>
    <property type="project" value="UniProtKB-SubCell"/>
</dbReference>
<dbReference type="GO" id="GO:0008137">
    <property type="term" value="F:NADH dehydrogenase (ubiquinone) activity"/>
    <property type="evidence" value="ECO:0007669"/>
    <property type="project" value="InterPro"/>
</dbReference>
<dbReference type="GO" id="GO:0048038">
    <property type="term" value="F:quinone binding"/>
    <property type="evidence" value="ECO:0007669"/>
    <property type="project" value="UniProtKB-KW"/>
</dbReference>
<dbReference type="GO" id="GO:0042773">
    <property type="term" value="P:ATP synthesis coupled electron transport"/>
    <property type="evidence" value="ECO:0007669"/>
    <property type="project" value="InterPro"/>
</dbReference>
<dbReference type="GO" id="GO:0019684">
    <property type="term" value="P:photosynthesis, light reaction"/>
    <property type="evidence" value="ECO:0007669"/>
    <property type="project" value="UniProtKB-UniRule"/>
</dbReference>
<dbReference type="HAMAP" id="MF_00445">
    <property type="entry name" value="NDH1_NuoN_1"/>
    <property type="match status" value="1"/>
</dbReference>
<dbReference type="InterPro" id="IPR010096">
    <property type="entry name" value="NADH-Q_OxRdtase_suN/2"/>
</dbReference>
<dbReference type="InterPro" id="IPR001750">
    <property type="entry name" value="ND/Mrp_TM"/>
</dbReference>
<dbReference type="InterPro" id="IPR045693">
    <property type="entry name" value="Ndh2_N"/>
</dbReference>
<dbReference type="NCBIfam" id="TIGR01770">
    <property type="entry name" value="NDH_I_N"/>
    <property type="match status" value="1"/>
</dbReference>
<dbReference type="NCBIfam" id="NF002701">
    <property type="entry name" value="PRK02504.1"/>
    <property type="match status" value="1"/>
</dbReference>
<dbReference type="PANTHER" id="PTHR22773">
    <property type="entry name" value="NADH DEHYDROGENASE"/>
    <property type="match status" value="1"/>
</dbReference>
<dbReference type="Pfam" id="PF19530">
    <property type="entry name" value="Ndh2_N"/>
    <property type="match status" value="1"/>
</dbReference>
<dbReference type="Pfam" id="PF00361">
    <property type="entry name" value="Proton_antipo_M"/>
    <property type="match status" value="1"/>
</dbReference>
<dbReference type="PRINTS" id="PR01434">
    <property type="entry name" value="NADHDHGNASE5"/>
</dbReference>
<feature type="chain" id="PRO_0000225359" description="NAD(P)H-quinone oxidoreductase subunit 2">
    <location>
        <begin position="1"/>
        <end position="526"/>
    </location>
</feature>
<feature type="transmembrane region" description="Helical" evidence="1">
    <location>
        <begin position="16"/>
        <end position="36"/>
    </location>
</feature>
<feature type="transmembrane region" description="Helical" evidence="1">
    <location>
        <begin position="43"/>
        <end position="63"/>
    </location>
</feature>
<feature type="transmembrane region" description="Helical" evidence="1">
    <location>
        <begin position="80"/>
        <end position="100"/>
    </location>
</feature>
<feature type="transmembrane region" description="Helical" evidence="1">
    <location>
        <begin position="107"/>
        <end position="127"/>
    </location>
</feature>
<feature type="transmembrane region" description="Helical" evidence="1">
    <location>
        <begin position="133"/>
        <end position="153"/>
    </location>
</feature>
<feature type="transmembrane region" description="Helical" evidence="1">
    <location>
        <begin position="168"/>
        <end position="188"/>
    </location>
</feature>
<feature type="transmembrane region" description="Helical" evidence="1">
    <location>
        <begin position="211"/>
        <end position="231"/>
    </location>
</feature>
<feature type="transmembrane region" description="Helical" evidence="1">
    <location>
        <begin position="245"/>
        <end position="265"/>
    </location>
</feature>
<feature type="transmembrane region" description="Helical" evidence="1">
    <location>
        <begin position="279"/>
        <end position="299"/>
    </location>
</feature>
<feature type="transmembrane region" description="Helical" evidence="1">
    <location>
        <begin position="307"/>
        <end position="327"/>
    </location>
</feature>
<feature type="transmembrane region" description="Helical" evidence="1">
    <location>
        <begin position="335"/>
        <end position="355"/>
    </location>
</feature>
<feature type="transmembrane region" description="Helical" evidence="1">
    <location>
        <begin position="379"/>
        <end position="399"/>
    </location>
</feature>
<feature type="transmembrane region" description="Helical" evidence="1">
    <location>
        <begin position="401"/>
        <end position="421"/>
    </location>
</feature>
<feature type="transmembrane region" description="Helical" evidence="1">
    <location>
        <begin position="469"/>
        <end position="489"/>
    </location>
</feature>
<keyword id="KW-0472">Membrane</keyword>
<keyword id="KW-0520">NAD</keyword>
<keyword id="KW-0521">NADP</keyword>
<keyword id="KW-0618">Plastoquinone</keyword>
<keyword id="KW-0874">Quinone</keyword>
<keyword id="KW-1185">Reference proteome</keyword>
<keyword id="KW-0793">Thylakoid</keyword>
<keyword id="KW-1278">Translocase</keyword>
<keyword id="KW-0812">Transmembrane</keyword>
<keyword id="KW-1133">Transmembrane helix</keyword>
<keyword id="KW-0813">Transport</keyword>
<accession>Q8KX56</accession>
<accession>B1XKP9</accession>
<organism>
    <name type="scientific">Picosynechococcus sp. (strain ATCC 27264 / PCC 7002 / PR-6)</name>
    <name type="common">Agmenellum quadruplicatum</name>
    <dbReference type="NCBI Taxonomy" id="32049"/>
    <lineage>
        <taxon>Bacteria</taxon>
        <taxon>Bacillati</taxon>
        <taxon>Cyanobacteriota</taxon>
        <taxon>Cyanophyceae</taxon>
        <taxon>Oscillatoriophycideae</taxon>
        <taxon>Chroococcales</taxon>
        <taxon>Geminocystaceae</taxon>
        <taxon>Picosynechococcus</taxon>
    </lineage>
</organism>
<proteinExistence type="inferred from homology"/>
<sequence>MDFSSTVASQLYTGAILPESIVILTLIVVLVGDLIVGRARSGWIPYAAIAGLLGSVFALYLGWDNPHPVAFLGAFNSDNLSILFRGIIVLSTAFTIMMSVRYVERSGTALSEFICILLTATLGGMFLSGANELVMIFVSLEMLSISSYLLTGYMKRDPRSNEAALKYLLIGAASSAIFLYGVSLLYGLSGGKTILSEIALGFTDPQGGQSLALAIALVFAIAGIAFKISAVPFHQWTPDVYEGSPTPVVAFLSVGSKAAGFALAIRLLVTVFNPVSEEWHFIFTALAILSMVLGNVVALAQTSMKRMLAYSSIAQAGFVMIGLVAGTDAGYSSVIFYLLVYLFMNLGAFTCVILFSLRTGTDQIAEYAGLYQKDPLLTLGLSVCLLSLGGIPPLAGFFGKIYLFWAGWQAGLYGLVLLGLITSVISIYYYIRVIKMMVVKEPQEMSDSVRNYPAVTWTAVGMKPLQVGLVLSVIITSLAGILSNPLFVIADQSVTSTPMLQVANHPTEQVVAQVDSELVGVAIADH</sequence>
<reference key="1">
    <citation type="submission" date="2001-05" db="EMBL/GenBank/DDBJ databases">
        <title>An analysis of forty genes encoding electron transport proteins from Synechococcus sp. PCC 7002: a comparative study of electron transport proteins from cyanobacteria and chloroplasts.</title>
        <authorList>
            <person name="Nomura C.T."/>
            <person name="Persson S."/>
            <person name="Zhao J."/>
            <person name="Bryant D.A."/>
        </authorList>
    </citation>
    <scope>NUCLEOTIDE SEQUENCE [GENOMIC DNA]</scope>
</reference>
<reference key="2">
    <citation type="submission" date="2008-02" db="EMBL/GenBank/DDBJ databases">
        <title>Complete sequence of Synechococcus sp. PCC 7002.</title>
        <authorList>
            <person name="Li T."/>
            <person name="Zhao J."/>
            <person name="Zhao C."/>
            <person name="Liu Z."/>
            <person name="Zhao F."/>
            <person name="Marquardt J."/>
            <person name="Nomura C.T."/>
            <person name="Persson S."/>
            <person name="Detter J.C."/>
            <person name="Richardson P.M."/>
            <person name="Lanz C."/>
            <person name="Schuster S.C."/>
            <person name="Wang J."/>
            <person name="Li S."/>
            <person name="Huang X."/>
            <person name="Cai T."/>
            <person name="Yu Z."/>
            <person name="Luo J."/>
            <person name="Zhao J."/>
            <person name="Bryant D.A."/>
        </authorList>
    </citation>
    <scope>NUCLEOTIDE SEQUENCE [LARGE SCALE GENOMIC DNA]</scope>
    <source>
        <strain>ATCC 27264 / PCC 7002 / PR-6</strain>
    </source>
</reference>